<feature type="chain" id="PRO_0000375801" description="Succinyl-diaminopimelate desuccinylase">
    <location>
        <begin position="1"/>
        <end position="375"/>
    </location>
</feature>
<feature type="active site" evidence="1">
    <location>
        <position position="68"/>
    </location>
</feature>
<feature type="active site" description="Proton acceptor" evidence="1">
    <location>
        <position position="133"/>
    </location>
</feature>
<feature type="binding site" evidence="1">
    <location>
        <position position="66"/>
    </location>
    <ligand>
        <name>Zn(2+)</name>
        <dbReference type="ChEBI" id="CHEBI:29105"/>
        <label>1</label>
    </ligand>
</feature>
<feature type="binding site" evidence="1">
    <location>
        <position position="99"/>
    </location>
    <ligand>
        <name>Zn(2+)</name>
        <dbReference type="ChEBI" id="CHEBI:29105"/>
        <label>1</label>
    </ligand>
</feature>
<feature type="binding site" evidence="1">
    <location>
        <position position="99"/>
    </location>
    <ligand>
        <name>Zn(2+)</name>
        <dbReference type="ChEBI" id="CHEBI:29105"/>
        <label>2</label>
    </ligand>
</feature>
<feature type="binding site" evidence="1">
    <location>
        <position position="134"/>
    </location>
    <ligand>
        <name>Zn(2+)</name>
        <dbReference type="ChEBI" id="CHEBI:29105"/>
        <label>2</label>
    </ligand>
</feature>
<feature type="binding site" evidence="1">
    <location>
        <position position="162"/>
    </location>
    <ligand>
        <name>Zn(2+)</name>
        <dbReference type="ChEBI" id="CHEBI:29105"/>
        <label>1</label>
    </ligand>
</feature>
<feature type="binding site" evidence="1">
    <location>
        <position position="348"/>
    </location>
    <ligand>
        <name>Zn(2+)</name>
        <dbReference type="ChEBI" id="CHEBI:29105"/>
        <label>2</label>
    </ligand>
</feature>
<gene>
    <name evidence="1" type="primary">dapE</name>
    <name type="ordered locus">YpsIP31758_1255</name>
</gene>
<comment type="function">
    <text evidence="1">Catalyzes the hydrolysis of N-succinyl-L,L-diaminopimelic acid (SDAP), forming succinate and LL-2,6-diaminopimelate (DAP), an intermediate involved in the bacterial biosynthesis of lysine and meso-diaminopimelic acid, an essential component of bacterial cell walls.</text>
</comment>
<comment type="catalytic activity">
    <reaction evidence="1">
        <text>N-succinyl-(2S,6S)-2,6-diaminopimelate + H2O = (2S,6S)-2,6-diaminopimelate + succinate</text>
        <dbReference type="Rhea" id="RHEA:22608"/>
        <dbReference type="ChEBI" id="CHEBI:15377"/>
        <dbReference type="ChEBI" id="CHEBI:30031"/>
        <dbReference type="ChEBI" id="CHEBI:57609"/>
        <dbReference type="ChEBI" id="CHEBI:58087"/>
        <dbReference type="EC" id="3.5.1.18"/>
    </reaction>
</comment>
<comment type="cofactor">
    <cofactor evidence="1">
        <name>Zn(2+)</name>
        <dbReference type="ChEBI" id="CHEBI:29105"/>
    </cofactor>
    <cofactor evidence="1">
        <name>Co(2+)</name>
        <dbReference type="ChEBI" id="CHEBI:48828"/>
    </cofactor>
    <text evidence="1">Binds 2 Zn(2+) or Co(2+) ions per subunit.</text>
</comment>
<comment type="pathway">
    <text evidence="1">Amino-acid biosynthesis; L-lysine biosynthesis via DAP pathway; LL-2,6-diaminopimelate from (S)-tetrahydrodipicolinate (succinylase route): step 3/3.</text>
</comment>
<comment type="subunit">
    <text evidence="1">Homodimer.</text>
</comment>
<comment type="similarity">
    <text evidence="1">Belongs to the peptidase M20A family. DapE subfamily.</text>
</comment>
<proteinExistence type="inferred from homology"/>
<protein>
    <recommendedName>
        <fullName evidence="1">Succinyl-diaminopimelate desuccinylase</fullName>
        <shortName evidence="1">SDAP desuccinylase</shortName>
        <ecNumber evidence="1">3.5.1.18</ecNumber>
    </recommendedName>
    <alternativeName>
        <fullName evidence="1">N-succinyl-LL-2,6-diaminoheptanedioate amidohydrolase</fullName>
    </alternativeName>
</protein>
<sequence length="375" mass="40945">MICPVIELAQQLIKRPSLSPSDAGCQEIMIQRLAAIGFTIEPMNFGDTLNFWAWRGEGETLAFAGHTDVVPTGDESHWHSPPFEPTIRDGMLYGRGAADMKGSLAAMIVAAERFVAAHPDHKGRLAFMITSDEEAKAINGTVKVVEALMARHERLDYCLVGEPSSTDRVGDIVKNGRRGSITANLRIHGVQGHVAYPHLADNPVHRAMPALNELVATQWDEGNAFFPATSMQIANLQAGTGSNNVIPGEFYVQFNFRFSTELTDSLIKQRVAALLDRHQLDYTLEWVLSGQPFLTAKGALVDAVVNAVKHYTEITPQLLTTGGTSDGRFIALMGAQVVELGPVNATIHKVNECVSAADLQLLSRMYQKIMEQLIA</sequence>
<keyword id="KW-0028">Amino-acid biosynthesis</keyword>
<keyword id="KW-0170">Cobalt</keyword>
<keyword id="KW-0220">Diaminopimelate biosynthesis</keyword>
<keyword id="KW-0378">Hydrolase</keyword>
<keyword id="KW-0457">Lysine biosynthesis</keyword>
<keyword id="KW-0479">Metal-binding</keyword>
<keyword id="KW-0862">Zinc</keyword>
<evidence type="ECO:0000255" key="1">
    <source>
        <dbReference type="HAMAP-Rule" id="MF_01690"/>
    </source>
</evidence>
<accession>A7FG57</accession>
<reference key="1">
    <citation type="journal article" date="2007" name="PLoS Genet.">
        <title>The complete genome sequence of Yersinia pseudotuberculosis IP31758, the causative agent of Far East scarlet-like fever.</title>
        <authorList>
            <person name="Eppinger M."/>
            <person name="Rosovitz M.J."/>
            <person name="Fricke W.F."/>
            <person name="Rasko D.A."/>
            <person name="Kokorina G."/>
            <person name="Fayolle C."/>
            <person name="Lindler L.E."/>
            <person name="Carniel E."/>
            <person name="Ravel J."/>
        </authorList>
    </citation>
    <scope>NUCLEOTIDE SEQUENCE [LARGE SCALE GENOMIC DNA]</scope>
    <source>
        <strain>IP 31758</strain>
    </source>
</reference>
<dbReference type="EC" id="3.5.1.18" evidence="1"/>
<dbReference type="EMBL" id="CP000720">
    <property type="protein sequence ID" value="ABS46672.1"/>
    <property type="molecule type" value="Genomic_DNA"/>
</dbReference>
<dbReference type="RefSeq" id="WP_012104836.1">
    <property type="nucleotide sequence ID" value="NC_009708.1"/>
</dbReference>
<dbReference type="SMR" id="A7FG57"/>
<dbReference type="KEGG" id="ypi:YpsIP31758_1255"/>
<dbReference type="HOGENOM" id="CLU_021802_4_0_6"/>
<dbReference type="UniPathway" id="UPA00034">
    <property type="reaction ID" value="UER00021"/>
</dbReference>
<dbReference type="Proteomes" id="UP000002412">
    <property type="component" value="Chromosome"/>
</dbReference>
<dbReference type="GO" id="GO:0008777">
    <property type="term" value="F:acetylornithine deacetylase activity"/>
    <property type="evidence" value="ECO:0007669"/>
    <property type="project" value="TreeGrafter"/>
</dbReference>
<dbReference type="GO" id="GO:0050897">
    <property type="term" value="F:cobalt ion binding"/>
    <property type="evidence" value="ECO:0007669"/>
    <property type="project" value="UniProtKB-UniRule"/>
</dbReference>
<dbReference type="GO" id="GO:0009014">
    <property type="term" value="F:succinyl-diaminopimelate desuccinylase activity"/>
    <property type="evidence" value="ECO:0007669"/>
    <property type="project" value="UniProtKB-UniRule"/>
</dbReference>
<dbReference type="GO" id="GO:0008270">
    <property type="term" value="F:zinc ion binding"/>
    <property type="evidence" value="ECO:0007669"/>
    <property type="project" value="UniProtKB-UniRule"/>
</dbReference>
<dbReference type="GO" id="GO:0019877">
    <property type="term" value="P:diaminopimelate biosynthetic process"/>
    <property type="evidence" value="ECO:0007669"/>
    <property type="project" value="UniProtKB-UniRule"/>
</dbReference>
<dbReference type="GO" id="GO:0006526">
    <property type="term" value="P:L-arginine biosynthetic process"/>
    <property type="evidence" value="ECO:0007669"/>
    <property type="project" value="TreeGrafter"/>
</dbReference>
<dbReference type="GO" id="GO:0009089">
    <property type="term" value="P:lysine biosynthetic process via diaminopimelate"/>
    <property type="evidence" value="ECO:0007669"/>
    <property type="project" value="UniProtKB-UniRule"/>
</dbReference>
<dbReference type="CDD" id="cd03891">
    <property type="entry name" value="M20_DapE_proteobac"/>
    <property type="match status" value="1"/>
</dbReference>
<dbReference type="FunFam" id="3.30.70.360:FF:000011">
    <property type="entry name" value="Succinyl-diaminopimelate desuccinylase"/>
    <property type="match status" value="1"/>
</dbReference>
<dbReference type="FunFam" id="3.40.630.10:FF:000005">
    <property type="entry name" value="Succinyl-diaminopimelate desuccinylase"/>
    <property type="match status" value="1"/>
</dbReference>
<dbReference type="FunFam" id="3.40.630.10:FF:000010">
    <property type="entry name" value="Succinyl-diaminopimelate desuccinylase"/>
    <property type="match status" value="1"/>
</dbReference>
<dbReference type="Gene3D" id="3.40.630.10">
    <property type="entry name" value="Zn peptidases"/>
    <property type="match status" value="2"/>
</dbReference>
<dbReference type="HAMAP" id="MF_01690">
    <property type="entry name" value="DapE"/>
    <property type="match status" value="1"/>
</dbReference>
<dbReference type="InterPro" id="IPR001261">
    <property type="entry name" value="ArgE/DapE_CS"/>
</dbReference>
<dbReference type="InterPro" id="IPR036264">
    <property type="entry name" value="Bact_exopeptidase_dim_dom"/>
</dbReference>
<dbReference type="InterPro" id="IPR005941">
    <property type="entry name" value="DapE_proteobac"/>
</dbReference>
<dbReference type="InterPro" id="IPR002933">
    <property type="entry name" value="Peptidase_M20"/>
</dbReference>
<dbReference type="InterPro" id="IPR011650">
    <property type="entry name" value="Peptidase_M20_dimer"/>
</dbReference>
<dbReference type="InterPro" id="IPR050072">
    <property type="entry name" value="Peptidase_M20A"/>
</dbReference>
<dbReference type="NCBIfam" id="TIGR01246">
    <property type="entry name" value="dapE_proteo"/>
    <property type="match status" value="1"/>
</dbReference>
<dbReference type="NCBIfam" id="NF009557">
    <property type="entry name" value="PRK13009.1"/>
    <property type="match status" value="1"/>
</dbReference>
<dbReference type="PANTHER" id="PTHR43808">
    <property type="entry name" value="ACETYLORNITHINE DEACETYLASE"/>
    <property type="match status" value="1"/>
</dbReference>
<dbReference type="PANTHER" id="PTHR43808:SF31">
    <property type="entry name" value="N-ACETYL-L-CITRULLINE DEACETYLASE"/>
    <property type="match status" value="1"/>
</dbReference>
<dbReference type="Pfam" id="PF07687">
    <property type="entry name" value="M20_dimer"/>
    <property type="match status" value="1"/>
</dbReference>
<dbReference type="Pfam" id="PF01546">
    <property type="entry name" value="Peptidase_M20"/>
    <property type="match status" value="1"/>
</dbReference>
<dbReference type="SUPFAM" id="SSF55031">
    <property type="entry name" value="Bacterial exopeptidase dimerisation domain"/>
    <property type="match status" value="1"/>
</dbReference>
<dbReference type="SUPFAM" id="SSF53187">
    <property type="entry name" value="Zn-dependent exopeptidases"/>
    <property type="match status" value="1"/>
</dbReference>
<dbReference type="PROSITE" id="PS00758">
    <property type="entry name" value="ARGE_DAPE_CPG2_1"/>
    <property type="match status" value="1"/>
</dbReference>
<organism>
    <name type="scientific">Yersinia pseudotuberculosis serotype O:1b (strain IP 31758)</name>
    <dbReference type="NCBI Taxonomy" id="349747"/>
    <lineage>
        <taxon>Bacteria</taxon>
        <taxon>Pseudomonadati</taxon>
        <taxon>Pseudomonadota</taxon>
        <taxon>Gammaproteobacteria</taxon>
        <taxon>Enterobacterales</taxon>
        <taxon>Yersiniaceae</taxon>
        <taxon>Yersinia</taxon>
    </lineage>
</organism>
<name>DAPE_YERP3</name>